<name>TUSE_PECAS</name>
<accession>Q6D6C3</accession>
<protein>
    <recommendedName>
        <fullName>Sulfurtransferase TusE</fullName>
        <ecNumber>2.8.1.-</ecNumber>
    </recommendedName>
    <alternativeName>
        <fullName>tRNA 2-thiouridine synthesizing protein E</fullName>
    </alternativeName>
</protein>
<proteinExistence type="inferred from homology"/>
<comment type="function">
    <text evidence="1">Part of a sulfur-relay system required for 2-thiolation of 5-methylaminomethyl-2-thiouridine (mnm(5)s(2)U) at tRNA wobble positions. Could accept sulfur from TusD (By similarity).</text>
</comment>
<comment type="subunit">
    <text evidence="1">Interacts with the TusBCD complex. Interacts with MnmA (By similarity).</text>
</comment>
<comment type="subcellular location">
    <subcellularLocation>
        <location evidence="1">Cytoplasm</location>
    </subcellularLocation>
</comment>
<comment type="similarity">
    <text evidence="2">Belongs to the DsrC/TusE family.</text>
</comment>
<evidence type="ECO:0000250" key="1"/>
<evidence type="ECO:0000305" key="2"/>
<reference key="1">
    <citation type="journal article" date="2004" name="Proc. Natl. Acad. Sci. U.S.A.">
        <title>Genome sequence of the enterobacterial phytopathogen Erwinia carotovora subsp. atroseptica and characterization of virulence factors.</title>
        <authorList>
            <person name="Bell K.S."/>
            <person name="Sebaihia M."/>
            <person name="Pritchard L."/>
            <person name="Holden M.T.G."/>
            <person name="Hyman L.J."/>
            <person name="Holeva M.C."/>
            <person name="Thomson N.R."/>
            <person name="Bentley S.D."/>
            <person name="Churcher L.J.C."/>
            <person name="Mungall K."/>
            <person name="Atkin R."/>
            <person name="Bason N."/>
            <person name="Brooks K."/>
            <person name="Chillingworth T."/>
            <person name="Clark K."/>
            <person name="Doggett J."/>
            <person name="Fraser A."/>
            <person name="Hance Z."/>
            <person name="Hauser H."/>
            <person name="Jagels K."/>
            <person name="Moule S."/>
            <person name="Norbertczak H."/>
            <person name="Ormond D."/>
            <person name="Price C."/>
            <person name="Quail M.A."/>
            <person name="Sanders M."/>
            <person name="Walker D."/>
            <person name="Whitehead S."/>
            <person name="Salmond G.P.C."/>
            <person name="Birch P.R.J."/>
            <person name="Parkhill J."/>
            <person name="Toth I.K."/>
        </authorList>
    </citation>
    <scope>NUCLEOTIDE SEQUENCE [LARGE SCALE GENOMIC DNA]</scope>
    <source>
        <strain>SCRI 1043 / ATCC BAA-672</strain>
    </source>
</reference>
<keyword id="KW-0963">Cytoplasm</keyword>
<keyword id="KW-1185">Reference proteome</keyword>
<keyword id="KW-0808">Transferase</keyword>
<keyword id="KW-0819">tRNA processing</keyword>
<organism>
    <name type="scientific">Pectobacterium atrosepticum (strain SCRI 1043 / ATCC BAA-672)</name>
    <name type="common">Erwinia carotovora subsp. atroseptica</name>
    <dbReference type="NCBI Taxonomy" id="218491"/>
    <lineage>
        <taxon>Bacteria</taxon>
        <taxon>Pseudomonadati</taxon>
        <taxon>Pseudomonadota</taxon>
        <taxon>Gammaproteobacteria</taxon>
        <taxon>Enterobacterales</taxon>
        <taxon>Pectobacteriaceae</taxon>
        <taxon>Pectobacterium</taxon>
    </lineage>
</organism>
<sequence length="109" mass="12283">MLEFEGRTIATDAQGYLMDSTAWSEALAPVLAEQEGIALTEPHWEVVRFVRNFYQEFNTSPAIRMLVKAMAQKYGEEKGNSRYLYKLFPKGPAKQATKIAGLPKPVKCI</sequence>
<dbReference type="EC" id="2.8.1.-"/>
<dbReference type="EMBL" id="BX950851">
    <property type="protein sequence ID" value="CAG74667.1"/>
    <property type="molecule type" value="Genomic_DNA"/>
</dbReference>
<dbReference type="RefSeq" id="WP_011093338.1">
    <property type="nucleotide sequence ID" value="NC_004547.2"/>
</dbReference>
<dbReference type="SMR" id="Q6D6C3"/>
<dbReference type="STRING" id="218491.ECA1762"/>
<dbReference type="GeneID" id="57209525"/>
<dbReference type="KEGG" id="eca:ECA1762"/>
<dbReference type="eggNOG" id="COG2920">
    <property type="taxonomic scope" value="Bacteria"/>
</dbReference>
<dbReference type="HOGENOM" id="CLU_153199_1_0_6"/>
<dbReference type="OrthoDB" id="9786347at2"/>
<dbReference type="Proteomes" id="UP000007966">
    <property type="component" value="Chromosome"/>
</dbReference>
<dbReference type="GO" id="GO:0005737">
    <property type="term" value="C:cytoplasm"/>
    <property type="evidence" value="ECO:0007669"/>
    <property type="project" value="UniProtKB-SubCell"/>
</dbReference>
<dbReference type="GO" id="GO:0097163">
    <property type="term" value="F:sulfur carrier activity"/>
    <property type="evidence" value="ECO:0007669"/>
    <property type="project" value="TreeGrafter"/>
</dbReference>
<dbReference type="GO" id="GO:0016740">
    <property type="term" value="F:transferase activity"/>
    <property type="evidence" value="ECO:0007669"/>
    <property type="project" value="UniProtKB-KW"/>
</dbReference>
<dbReference type="GO" id="GO:0002143">
    <property type="term" value="P:tRNA wobble position uridine thiolation"/>
    <property type="evidence" value="ECO:0007669"/>
    <property type="project" value="TreeGrafter"/>
</dbReference>
<dbReference type="FunFam" id="1.10.10.370:FF:000001">
    <property type="entry name" value="Sulfurtransferase"/>
    <property type="match status" value="1"/>
</dbReference>
<dbReference type="FunFam" id="3.30.1420.10:FF:000001">
    <property type="entry name" value="Sulfurtransferase"/>
    <property type="match status" value="1"/>
</dbReference>
<dbReference type="Gene3D" id="3.30.1420.10">
    <property type="match status" value="1"/>
</dbReference>
<dbReference type="Gene3D" id="1.10.10.370">
    <property type="entry name" value="DsrC-like protein, C-terminal domain"/>
    <property type="match status" value="1"/>
</dbReference>
<dbReference type="InterPro" id="IPR042072">
    <property type="entry name" value="DsrC-like_C"/>
</dbReference>
<dbReference type="InterPro" id="IPR025526">
    <property type="entry name" value="DsrC-like_dom_sf"/>
</dbReference>
<dbReference type="InterPro" id="IPR043163">
    <property type="entry name" value="DsrC-like_N"/>
</dbReference>
<dbReference type="InterPro" id="IPR007453">
    <property type="entry name" value="DsrC/TusE"/>
</dbReference>
<dbReference type="NCBIfam" id="TIGR03342">
    <property type="entry name" value="dsrC_tusE_dsvC"/>
    <property type="match status" value="1"/>
</dbReference>
<dbReference type="NCBIfam" id="NF008562">
    <property type="entry name" value="PRK11508.1"/>
    <property type="match status" value="1"/>
</dbReference>
<dbReference type="PANTHER" id="PTHR37010">
    <property type="entry name" value="SULFURTRANSFERASE TUSE"/>
    <property type="match status" value="1"/>
</dbReference>
<dbReference type="PANTHER" id="PTHR37010:SF1">
    <property type="entry name" value="SULFURTRANSFERASE TUSE"/>
    <property type="match status" value="1"/>
</dbReference>
<dbReference type="Pfam" id="PF04358">
    <property type="entry name" value="DsrC"/>
    <property type="match status" value="1"/>
</dbReference>
<dbReference type="PIRSF" id="PIRSF006223">
    <property type="entry name" value="DsrC_TusE"/>
    <property type="match status" value="1"/>
</dbReference>
<dbReference type="SUPFAM" id="SSF69721">
    <property type="entry name" value="DsrC, the gamma subunit of dissimilatory sulfite reductase"/>
    <property type="match status" value="1"/>
</dbReference>
<gene>
    <name type="primary">tusE</name>
    <name type="ordered locus">ECA1762</name>
</gene>
<feature type="chain" id="PRO_0000234612" description="Sulfurtransferase TusE">
    <location>
        <begin position="1"/>
        <end position="109"/>
    </location>
</feature>
<feature type="active site" description="Cysteine persulfide intermediate" evidence="1">
    <location>
        <position position="108"/>
    </location>
</feature>